<dbReference type="EMBL" id="X95382">
    <property type="protein sequence ID" value="CAA64668.1"/>
    <property type="molecule type" value="mRNA"/>
</dbReference>
<dbReference type="EMBL" id="EF187820">
    <property type="protein sequence ID" value="ABM74183.1"/>
    <property type="molecule type" value="mRNA"/>
</dbReference>
<dbReference type="PIR" id="A02896">
    <property type="entry name" value="CYRBAA"/>
</dbReference>
<dbReference type="RefSeq" id="NP_001075875.2">
    <property type="nucleotide sequence ID" value="NM_001082406.2"/>
</dbReference>
<dbReference type="RefSeq" id="XP_069927735.1">
    <property type="nucleotide sequence ID" value="XM_070071634.1"/>
</dbReference>
<dbReference type="SMR" id="P02493"/>
<dbReference type="FunCoup" id="P02493">
    <property type="interactions" value="146"/>
</dbReference>
<dbReference type="STRING" id="9986.ENSOCUP00000024422"/>
<dbReference type="GlyCosmos" id="P02493">
    <property type="glycosylation" value="1 site, No reported glycans"/>
</dbReference>
<dbReference type="iPTMnet" id="P02493"/>
<dbReference type="Ensembl" id="ENSOCUT00000003454.3">
    <property type="protein sequence ID" value="ENSOCUP00000002996.3"/>
    <property type="gene ID" value="ENSOCUG00000003457.3"/>
</dbReference>
<dbReference type="GeneID" id="100009294"/>
<dbReference type="KEGG" id="ocu:100009294"/>
<dbReference type="CTD" id="1409"/>
<dbReference type="GeneTree" id="ENSGT00940000160159"/>
<dbReference type="InParanoid" id="P02493"/>
<dbReference type="OrthoDB" id="1431247at2759"/>
<dbReference type="Proteomes" id="UP000001811">
    <property type="component" value="Unplaced"/>
</dbReference>
<dbReference type="Bgee" id="ENSOCUG00000003457">
    <property type="expression patterns" value="Expressed in embryo and 2 other cell types or tissues"/>
</dbReference>
<dbReference type="GO" id="GO:0005737">
    <property type="term" value="C:cytoplasm"/>
    <property type="evidence" value="ECO:0000250"/>
    <property type="project" value="UniProtKB"/>
</dbReference>
<dbReference type="GO" id="GO:0005634">
    <property type="term" value="C:nucleus"/>
    <property type="evidence" value="ECO:0000250"/>
    <property type="project" value="UniProtKB"/>
</dbReference>
<dbReference type="GO" id="GO:0046872">
    <property type="term" value="F:metal ion binding"/>
    <property type="evidence" value="ECO:0007669"/>
    <property type="project" value="UniProtKB-KW"/>
</dbReference>
<dbReference type="GO" id="GO:0005212">
    <property type="term" value="F:structural constituent of eye lens"/>
    <property type="evidence" value="ECO:0007669"/>
    <property type="project" value="UniProtKB-KW"/>
</dbReference>
<dbReference type="GO" id="GO:0051082">
    <property type="term" value="F:unfolded protein binding"/>
    <property type="evidence" value="ECO:0007669"/>
    <property type="project" value="TreeGrafter"/>
</dbReference>
<dbReference type="GO" id="GO:0002088">
    <property type="term" value="P:lens development in camera-type eye"/>
    <property type="evidence" value="ECO:0007669"/>
    <property type="project" value="TreeGrafter"/>
</dbReference>
<dbReference type="GO" id="GO:0043066">
    <property type="term" value="P:negative regulation of apoptotic process"/>
    <property type="evidence" value="ECO:0007669"/>
    <property type="project" value="TreeGrafter"/>
</dbReference>
<dbReference type="GO" id="GO:0042026">
    <property type="term" value="P:protein refolding"/>
    <property type="evidence" value="ECO:0007669"/>
    <property type="project" value="TreeGrafter"/>
</dbReference>
<dbReference type="GO" id="GO:0009408">
    <property type="term" value="P:response to heat"/>
    <property type="evidence" value="ECO:0007669"/>
    <property type="project" value="TreeGrafter"/>
</dbReference>
<dbReference type="FunFam" id="2.60.40.790:FF:000008">
    <property type="entry name" value="Alpha-crystallin A chain"/>
    <property type="match status" value="1"/>
</dbReference>
<dbReference type="Gene3D" id="2.60.40.790">
    <property type="match status" value="1"/>
</dbReference>
<dbReference type="InterPro" id="IPR002068">
    <property type="entry name" value="A-crystallin/Hsp20_dom"/>
</dbReference>
<dbReference type="InterPro" id="IPR055269">
    <property type="entry name" value="Alpha-crystallin/HSP_16"/>
</dbReference>
<dbReference type="InterPro" id="IPR001436">
    <property type="entry name" value="Alpha-crystallin/sHSP_animal"/>
</dbReference>
<dbReference type="InterPro" id="IPR003090">
    <property type="entry name" value="Alpha-crystallin_N"/>
</dbReference>
<dbReference type="InterPro" id="IPR008978">
    <property type="entry name" value="HSP20-like_chaperone"/>
</dbReference>
<dbReference type="PANTHER" id="PTHR45640:SF14">
    <property type="entry name" value="ALPHA-CRYSTALLIN A CHAIN"/>
    <property type="match status" value="1"/>
</dbReference>
<dbReference type="PANTHER" id="PTHR45640">
    <property type="entry name" value="HEAT SHOCK PROTEIN HSP-12.2-RELATED"/>
    <property type="match status" value="1"/>
</dbReference>
<dbReference type="Pfam" id="PF00525">
    <property type="entry name" value="Crystallin"/>
    <property type="match status" value="1"/>
</dbReference>
<dbReference type="Pfam" id="PF00011">
    <property type="entry name" value="HSP20"/>
    <property type="match status" value="1"/>
</dbReference>
<dbReference type="PIRSF" id="PIRSF036514">
    <property type="entry name" value="Sm_HSP_B1"/>
    <property type="match status" value="1"/>
</dbReference>
<dbReference type="PRINTS" id="PR00299">
    <property type="entry name" value="ACRYSTALLIN"/>
</dbReference>
<dbReference type="SUPFAM" id="SSF49764">
    <property type="entry name" value="HSP20-like chaperones"/>
    <property type="match status" value="1"/>
</dbReference>
<dbReference type="PROSITE" id="PS01031">
    <property type="entry name" value="SHSP"/>
    <property type="match status" value="1"/>
</dbReference>
<name>CRYAA_RABIT</name>
<protein>
    <recommendedName>
        <fullName>Alpha-crystallin A chain</fullName>
    </recommendedName>
</protein>
<evidence type="ECO:0000250" key="1"/>
<evidence type="ECO:0000250" key="2">
    <source>
        <dbReference type="UniProtKB" id="P02470"/>
    </source>
</evidence>
<evidence type="ECO:0000250" key="3">
    <source>
        <dbReference type="UniProtKB" id="P02489"/>
    </source>
</evidence>
<evidence type="ECO:0000255" key="4">
    <source>
        <dbReference type="PROSITE-ProRule" id="PRU00285"/>
    </source>
</evidence>
<evidence type="ECO:0000256" key="5">
    <source>
        <dbReference type="SAM" id="MobiDB-lite"/>
    </source>
</evidence>
<evidence type="ECO:0000269" key="6">
    <source>
    </source>
</evidence>
<evidence type="ECO:0000269" key="7">
    <source ref="4"/>
</evidence>
<evidence type="ECO:0000305" key="8"/>
<sequence>MDVTIQHPWFKRTLGPFYPSRLFDQFFGEGLFEYDLLPFLSSTISPYYRQSLFRTVLDSGISEVRSDRDKFVIFLDVKHFSPEDLTVKVQEDFVEIHGKHNERQDDHGYISREFHRRYRLPSNVDQSALSCSLSADGMLTFSGPKVQSGLDAGHSERAIPVSREEKPSSAPSS</sequence>
<gene>
    <name type="primary">CRYAA</name>
</gene>
<reference key="1">
    <citation type="journal article" date="1993" name="J. Protein Chem.">
        <title>Primary structure of rabbit lens alpha-crystallins.</title>
        <authorList>
            <person name="Parveen R."/>
            <person name="Smith J.B."/>
            <person name="Sun Y."/>
            <person name="Smith D.L."/>
        </authorList>
    </citation>
    <scope>PROTEIN SEQUENCE</scope>
    <scope>PHOSPHORYLATION AT SER-122</scope>
    <source>
        <tissue>Lens</tissue>
    </source>
</reference>
<reference key="2">
    <citation type="journal article" date="1996" name="Invest. Ophthalmol. Vis. Sci.">
        <title>Expression of crystallins, Pax6, filensin, CP49, MIP, and MP20 in lens-derived cell lines.</title>
        <authorList>
            <person name="Krausz E."/>
            <person name="Augusteyn R.C."/>
            <person name="Quinlan R.A."/>
            <person name="Reddan J.R."/>
            <person name="Russell P."/>
            <person name="Sax C.M."/>
            <person name="Graw J."/>
        </authorList>
    </citation>
    <scope>NUCLEOTIDE SEQUENCE [MRNA]</scope>
    <source>
        <tissue>Lens</tissue>
    </source>
</reference>
<reference key="3">
    <citation type="submission" date="2006-12" db="EMBL/GenBank/DDBJ databases">
        <authorList>
            <person name="Wistow G."/>
        </authorList>
    </citation>
    <scope>NUCLEOTIDE SEQUENCE [MRNA]</scope>
    <source>
        <tissue>Lens</tissue>
    </source>
</reference>
<reference key="4">
    <citation type="journal article" date="1975" name="Eur. J. Biochem.">
        <title>Primary structures of the alpha-crystallin A chains of seven mammalian species.</title>
        <authorList>
            <person name="de Jong W.W."/>
            <person name="van der Ouderaa F.J."/>
            <person name="Versteeg M."/>
            <person name="Groenewoud G."/>
            <person name="van Amelsvoort J.M."/>
            <person name="Bloemendal H."/>
        </authorList>
    </citation>
    <scope>PROTEIN SEQUENCE OF 2-5 AND 146-150</scope>
    <scope>ACETYLATION AT MET-1</scope>
</reference>
<comment type="function">
    <text evidence="3">Contributes to the transparency and refractive index of the lens. Acts as a chaperone, preventing aggregation of various proteins under a wide range of stress conditions. Required for the correct formation of lens intermediate filaments as part of a complex composed of BFSP1, BFSP2 and CRYAA.</text>
</comment>
<comment type="subunit">
    <text evidence="2 3">Heteromer composed of three CRYAA and one CRYAB subunits. Inter-subunit bridging via zinc ions enhances stability, which is crucial as there is no protein turn over in the lens. Can also form homodimers and homotetramers (dimers of dimers) which serve as the building blocks of homooligomers (By similarity). Within homooligomers, the zinc-binding motif is created from residues of 3 different molecules. His-100 and Glu-102 from one molecule are ligands of the zinc ion, and His-107 and His-154 residues from additional molecules complete the site with tetrahedral coordination geometry (By similarity). Part of a complex required for lens intermediate filament formation composed of BFSP1, BFSP2 and CRYAA (By similarity).</text>
</comment>
<comment type="subcellular location">
    <subcellularLocation>
        <location evidence="3">Cytoplasm</location>
    </subcellularLocation>
    <subcellularLocation>
        <location evidence="3">Nucleus</location>
    </subcellularLocation>
    <text evidence="3">Translocates to the nucleus during heat shock and resides in sub-nuclear structures known as SC35 speckles or nuclear splicing speckles.</text>
</comment>
<comment type="PTM">
    <text evidence="3">Acetylation at Lys-70 may increase chaperone activity.</text>
</comment>
<comment type="PTM">
    <text evidence="3">Undergoes age-dependent proteolytical cleavage at the C-terminus.</text>
</comment>
<comment type="similarity">
    <text evidence="4">Belongs to the small heat shock protein (HSP20) family.</text>
</comment>
<keyword id="KW-0007">Acetylation</keyword>
<keyword id="KW-0143">Chaperone</keyword>
<keyword id="KW-0963">Cytoplasm</keyword>
<keyword id="KW-0903">Direct protein sequencing</keyword>
<keyword id="KW-0273">Eye lens protein</keyword>
<keyword id="KW-0325">Glycoprotein</keyword>
<keyword id="KW-0479">Metal-binding</keyword>
<keyword id="KW-0488">Methylation</keyword>
<keyword id="KW-0539">Nucleus</keyword>
<keyword id="KW-0597">Phosphoprotein</keyword>
<keyword id="KW-1185">Reference proteome</keyword>
<keyword id="KW-0862">Zinc</keyword>
<proteinExistence type="evidence at protein level"/>
<organism>
    <name type="scientific">Oryctolagus cuniculus</name>
    <name type="common">Rabbit</name>
    <dbReference type="NCBI Taxonomy" id="9986"/>
    <lineage>
        <taxon>Eukaryota</taxon>
        <taxon>Metazoa</taxon>
        <taxon>Chordata</taxon>
        <taxon>Craniata</taxon>
        <taxon>Vertebrata</taxon>
        <taxon>Euteleostomi</taxon>
        <taxon>Mammalia</taxon>
        <taxon>Eutheria</taxon>
        <taxon>Euarchontoglires</taxon>
        <taxon>Glires</taxon>
        <taxon>Lagomorpha</taxon>
        <taxon>Leporidae</taxon>
        <taxon>Oryctolagus</taxon>
    </lineage>
</organism>
<accession>P02493</accession>
<accession>A2IBH4</accession>
<feature type="chain" id="PRO_0000125882" description="Alpha-crystallin A chain">
    <location>
        <begin position="1"/>
        <end position="173"/>
    </location>
</feature>
<feature type="domain" description="sHSP" evidence="4">
    <location>
        <begin position="52"/>
        <end position="162"/>
    </location>
</feature>
<feature type="region of interest" description="Required for complex formation with BFSP1 and BFSP2" evidence="3">
    <location>
        <begin position="1"/>
        <end position="63"/>
    </location>
</feature>
<feature type="region of interest" description="Disordered" evidence="5">
    <location>
        <begin position="145"/>
        <end position="173"/>
    </location>
</feature>
<feature type="compositionally biased region" description="Basic and acidic residues" evidence="5">
    <location>
        <begin position="153"/>
        <end position="167"/>
    </location>
</feature>
<feature type="binding site" evidence="2">
    <location>
        <position position="100"/>
    </location>
    <ligand>
        <name>Zn(2+)</name>
        <dbReference type="ChEBI" id="CHEBI:29105"/>
        <label>1</label>
    </ligand>
</feature>
<feature type="binding site" evidence="2">
    <location>
        <position position="102"/>
    </location>
    <ligand>
        <name>Zn(2+)</name>
        <dbReference type="ChEBI" id="CHEBI:29105"/>
        <label>1</label>
    </ligand>
</feature>
<feature type="binding site" evidence="2">
    <location>
        <position position="107"/>
    </location>
    <ligand>
        <name>Zn(2+)</name>
        <dbReference type="ChEBI" id="CHEBI:29105"/>
        <label>2</label>
    </ligand>
</feature>
<feature type="binding site" evidence="2">
    <location>
        <position position="154"/>
    </location>
    <ligand>
        <name>Zn(2+)</name>
        <dbReference type="ChEBI" id="CHEBI:29105"/>
        <label>3</label>
    </ligand>
</feature>
<feature type="modified residue" description="N-acetylmethionine" evidence="6 7">
    <location>
        <position position="1"/>
    </location>
</feature>
<feature type="modified residue" description="Deamidated glutamine; partial" evidence="1">
    <location>
        <position position="6"/>
    </location>
</feature>
<feature type="modified residue" description="Phosphoserine" evidence="3">
    <location>
        <position position="45"/>
    </location>
</feature>
<feature type="modified residue" description="Deamidated glutamine; partial" evidence="1">
    <location>
        <position position="50"/>
    </location>
</feature>
<feature type="modified residue" description="N6-acetyllysine" evidence="3">
    <location>
        <position position="70"/>
    </location>
</feature>
<feature type="modified residue" description="Deamidated glutamine; partial" evidence="1">
    <location>
        <position position="90"/>
    </location>
</feature>
<feature type="modified residue" description="N6-acetyllysine" evidence="3">
    <location>
        <position position="99"/>
    </location>
</feature>
<feature type="modified residue" description="Deamidated asparagine; partial" evidence="1">
    <location>
        <position position="101"/>
    </location>
</feature>
<feature type="modified residue" description="Phosphoserine" evidence="6">
    <location>
        <position position="122"/>
    </location>
</feature>
<feature type="modified residue" description="Deamidated asparagine; partial" evidence="1">
    <location>
        <position position="123"/>
    </location>
</feature>
<feature type="modified residue" description="Deamidated glutamine; partial" evidence="1">
    <location>
        <position position="147"/>
    </location>
</feature>
<feature type="glycosylation site" description="O-linked (GlcNAc) serine" evidence="1">
    <location>
        <position position="162"/>
    </location>
</feature>
<feature type="sequence conflict" description="In Ref. 2; CAA64668." evidence="8" ref="2">
    <original>A</original>
    <variation>V</variation>
    <location>
        <position position="170"/>
    </location>
</feature>